<protein>
    <recommendedName>
        <fullName evidence="1">UDP-3-O-acyl-N-acetylglucosamine deacetylase</fullName>
        <shortName evidence="1">UDP-3-O-acyl-GlcNAc deacetylase</shortName>
        <ecNumber evidence="1">3.5.1.108</ecNumber>
    </recommendedName>
    <alternativeName>
        <fullName evidence="1">UDP-3-O-[R-3-hydroxymyristoyl]-N-acetylglucosamine deacetylase</fullName>
    </alternativeName>
</protein>
<accession>B0VNZ3</accession>
<name>LPXC_ACIBS</name>
<gene>
    <name evidence="1" type="primary">lpxC</name>
    <name type="ordered locus">ABSDF3466</name>
</gene>
<evidence type="ECO:0000255" key="1">
    <source>
        <dbReference type="HAMAP-Rule" id="MF_00388"/>
    </source>
</evidence>
<proteinExistence type="inferred from homology"/>
<reference key="1">
    <citation type="journal article" date="2008" name="PLoS ONE">
        <title>Comparative analysis of Acinetobacters: three genomes for three lifestyles.</title>
        <authorList>
            <person name="Vallenet D."/>
            <person name="Nordmann P."/>
            <person name="Barbe V."/>
            <person name="Poirel L."/>
            <person name="Mangenot S."/>
            <person name="Bataille E."/>
            <person name="Dossat C."/>
            <person name="Gas S."/>
            <person name="Kreimeyer A."/>
            <person name="Lenoble P."/>
            <person name="Oztas S."/>
            <person name="Poulain J."/>
            <person name="Segurens B."/>
            <person name="Robert C."/>
            <person name="Abergel C."/>
            <person name="Claverie J.-M."/>
            <person name="Raoult D."/>
            <person name="Medigue C."/>
            <person name="Weissenbach J."/>
            <person name="Cruveiller S."/>
        </authorList>
    </citation>
    <scope>NUCLEOTIDE SEQUENCE [LARGE SCALE GENOMIC DNA]</scope>
    <source>
        <strain>SDF</strain>
    </source>
</reference>
<dbReference type="EC" id="3.5.1.108" evidence="1"/>
<dbReference type="EMBL" id="CU468230">
    <property type="protein sequence ID" value="CAP02729.1"/>
    <property type="molecule type" value="Genomic_DNA"/>
</dbReference>
<dbReference type="SMR" id="B0VNZ3"/>
<dbReference type="KEGG" id="abm:ABSDF3466"/>
<dbReference type="HOGENOM" id="CLU_046528_1_0_6"/>
<dbReference type="UniPathway" id="UPA00359">
    <property type="reaction ID" value="UER00478"/>
</dbReference>
<dbReference type="Proteomes" id="UP000001741">
    <property type="component" value="Chromosome"/>
</dbReference>
<dbReference type="GO" id="GO:0016020">
    <property type="term" value="C:membrane"/>
    <property type="evidence" value="ECO:0007669"/>
    <property type="project" value="GOC"/>
</dbReference>
<dbReference type="GO" id="GO:0046872">
    <property type="term" value="F:metal ion binding"/>
    <property type="evidence" value="ECO:0007669"/>
    <property type="project" value="UniProtKB-KW"/>
</dbReference>
<dbReference type="GO" id="GO:0103117">
    <property type="term" value="F:UDP-3-O-acyl-N-acetylglucosamine deacetylase activity"/>
    <property type="evidence" value="ECO:0007669"/>
    <property type="project" value="UniProtKB-UniRule"/>
</dbReference>
<dbReference type="GO" id="GO:0009245">
    <property type="term" value="P:lipid A biosynthetic process"/>
    <property type="evidence" value="ECO:0007669"/>
    <property type="project" value="UniProtKB-UniRule"/>
</dbReference>
<dbReference type="Gene3D" id="3.30.230.20">
    <property type="entry name" value="lpxc deacetylase, domain 1"/>
    <property type="match status" value="1"/>
</dbReference>
<dbReference type="Gene3D" id="3.30.1700.10">
    <property type="entry name" value="lpxc deacetylase, domain 2"/>
    <property type="match status" value="1"/>
</dbReference>
<dbReference type="HAMAP" id="MF_00388">
    <property type="entry name" value="LpxC"/>
    <property type="match status" value="1"/>
</dbReference>
<dbReference type="InterPro" id="IPR020568">
    <property type="entry name" value="Ribosomal_Su5_D2-typ_SF"/>
</dbReference>
<dbReference type="InterPro" id="IPR004463">
    <property type="entry name" value="UDP-acyl_GlcNac_deAcase"/>
</dbReference>
<dbReference type="InterPro" id="IPR011334">
    <property type="entry name" value="UDP-acyl_GlcNac_deAcase_C"/>
</dbReference>
<dbReference type="InterPro" id="IPR015870">
    <property type="entry name" value="UDP-acyl_N-AcGlcN_deAcase_N"/>
</dbReference>
<dbReference type="NCBIfam" id="TIGR00325">
    <property type="entry name" value="lpxC"/>
    <property type="match status" value="1"/>
</dbReference>
<dbReference type="PANTHER" id="PTHR33694">
    <property type="entry name" value="UDP-3-O-ACYL-N-ACETYLGLUCOSAMINE DEACETYLASE 1, MITOCHONDRIAL-RELATED"/>
    <property type="match status" value="1"/>
</dbReference>
<dbReference type="PANTHER" id="PTHR33694:SF1">
    <property type="entry name" value="UDP-3-O-ACYL-N-ACETYLGLUCOSAMINE DEACETYLASE 1, MITOCHONDRIAL-RELATED"/>
    <property type="match status" value="1"/>
</dbReference>
<dbReference type="Pfam" id="PF03331">
    <property type="entry name" value="LpxC"/>
    <property type="match status" value="1"/>
</dbReference>
<dbReference type="SUPFAM" id="SSF54211">
    <property type="entry name" value="Ribosomal protein S5 domain 2-like"/>
    <property type="match status" value="2"/>
</dbReference>
<sequence>MVKQRTLNRVVKASGIGLHSGQKVMINFIPHTVDGGIVFRRIDLDPPVDIPANALLIQEAFMCSNLVTGDIKVGTIEHVMSAIASLGIDNLIVEVSASEVPIMDGSAGPFIYLLMQGGLREQDAPKKFIKILKPVEALIDDKKAIFSPHNGFQLNFTIDFDHPAFAKEYQSATIDFSTETFVYEVSEARTFGFMKDLDYLKANNLALGASLDNAIGVDDTGVVNEEGLRFADEFVRHKILDAVGDLYLLGHQIIAKFDGYKSGHALNNQLLRNVQSDPSNYEIVTFDDEKDCPIPYVSVT</sequence>
<feature type="chain" id="PRO_1000190880" description="UDP-3-O-acyl-N-acetylglucosamine deacetylase">
    <location>
        <begin position="1"/>
        <end position="300"/>
    </location>
</feature>
<feature type="active site" description="Proton donor" evidence="1">
    <location>
        <position position="264"/>
    </location>
</feature>
<feature type="binding site" evidence="1">
    <location>
        <position position="78"/>
    </location>
    <ligand>
        <name>Zn(2+)</name>
        <dbReference type="ChEBI" id="CHEBI:29105"/>
    </ligand>
</feature>
<feature type="binding site" evidence="1">
    <location>
        <position position="237"/>
    </location>
    <ligand>
        <name>Zn(2+)</name>
        <dbReference type="ChEBI" id="CHEBI:29105"/>
    </ligand>
</feature>
<feature type="binding site" evidence="1">
    <location>
        <position position="241"/>
    </location>
    <ligand>
        <name>Zn(2+)</name>
        <dbReference type="ChEBI" id="CHEBI:29105"/>
    </ligand>
</feature>
<organism>
    <name type="scientific">Acinetobacter baumannii (strain SDF)</name>
    <dbReference type="NCBI Taxonomy" id="509170"/>
    <lineage>
        <taxon>Bacteria</taxon>
        <taxon>Pseudomonadati</taxon>
        <taxon>Pseudomonadota</taxon>
        <taxon>Gammaproteobacteria</taxon>
        <taxon>Moraxellales</taxon>
        <taxon>Moraxellaceae</taxon>
        <taxon>Acinetobacter</taxon>
        <taxon>Acinetobacter calcoaceticus/baumannii complex</taxon>
    </lineage>
</organism>
<comment type="function">
    <text evidence="1">Catalyzes the hydrolysis of UDP-3-O-myristoyl-N-acetylglucosamine to form UDP-3-O-myristoylglucosamine and acetate, the committed step in lipid A biosynthesis.</text>
</comment>
<comment type="catalytic activity">
    <reaction evidence="1">
        <text>a UDP-3-O-[(3R)-3-hydroxyacyl]-N-acetyl-alpha-D-glucosamine + H2O = a UDP-3-O-[(3R)-3-hydroxyacyl]-alpha-D-glucosamine + acetate</text>
        <dbReference type="Rhea" id="RHEA:67816"/>
        <dbReference type="ChEBI" id="CHEBI:15377"/>
        <dbReference type="ChEBI" id="CHEBI:30089"/>
        <dbReference type="ChEBI" id="CHEBI:137740"/>
        <dbReference type="ChEBI" id="CHEBI:173225"/>
        <dbReference type="EC" id="3.5.1.108"/>
    </reaction>
</comment>
<comment type="cofactor">
    <cofactor evidence="1">
        <name>Zn(2+)</name>
        <dbReference type="ChEBI" id="CHEBI:29105"/>
    </cofactor>
</comment>
<comment type="pathway">
    <text evidence="1">Glycolipid biosynthesis; lipid IV(A) biosynthesis; lipid IV(A) from (3R)-3-hydroxytetradecanoyl-[acyl-carrier-protein] and UDP-N-acetyl-alpha-D-glucosamine: step 2/6.</text>
</comment>
<comment type="similarity">
    <text evidence="1">Belongs to the LpxC family.</text>
</comment>
<keyword id="KW-0378">Hydrolase</keyword>
<keyword id="KW-0441">Lipid A biosynthesis</keyword>
<keyword id="KW-0444">Lipid biosynthesis</keyword>
<keyword id="KW-0443">Lipid metabolism</keyword>
<keyword id="KW-0479">Metal-binding</keyword>
<keyword id="KW-0862">Zinc</keyword>